<feature type="transit peptide" description="Chloroplast" evidence="12">
    <location>
        <begin position="1"/>
        <end position="62"/>
    </location>
</feature>
<feature type="chain" id="PRO_0000158253" description="Imidazoleglycerol-phosphate dehydratase 1, chloroplastic">
    <location>
        <begin position="63"/>
        <end position="270"/>
    </location>
</feature>
<feature type="region of interest" description="Disordered" evidence="2">
    <location>
        <begin position="250"/>
        <end position="270"/>
    </location>
</feature>
<feature type="binding site" evidence="1">
    <location>
        <position position="84"/>
    </location>
    <ligand>
        <name>substrate</name>
    </ligand>
</feature>
<feature type="binding site" evidence="1">
    <location>
        <begin position="110"/>
        <end position="118"/>
    </location>
    <ligand>
        <name>substrate</name>
    </ligand>
</feature>
<feature type="binding site" evidence="3 11">
    <location>
        <position position="110"/>
    </location>
    <ligand>
        <name>Mn(2+)</name>
        <dbReference type="ChEBI" id="CHEBI:29035"/>
        <label>1</label>
    </ligand>
</feature>
<feature type="binding site" evidence="1">
    <location>
        <begin position="136"/>
        <end position="140"/>
    </location>
    <ligand>
        <name>substrate</name>
    </ligand>
</feature>
<feature type="binding site" evidence="3 11">
    <location>
        <position position="136"/>
    </location>
    <ligand>
        <name>Mn(2+)</name>
        <dbReference type="ChEBI" id="CHEBI:29035"/>
        <label>2</label>
    </ligand>
</feature>
<feature type="binding site" evidence="3 11">
    <location>
        <position position="137"/>
    </location>
    <ligand>
        <name>Mn(2+)</name>
        <dbReference type="ChEBI" id="CHEBI:29035"/>
        <label>1</label>
    </ligand>
</feature>
<feature type="binding site" evidence="3 11">
    <location>
        <position position="140"/>
    </location>
    <ligand>
        <name>Mn(2+)</name>
        <dbReference type="ChEBI" id="CHEBI:29035"/>
        <label>2</label>
    </ligand>
</feature>
<feature type="binding site" evidence="1">
    <location>
        <position position="162"/>
    </location>
    <ligand>
        <name>substrate</name>
    </ligand>
</feature>
<feature type="binding site" evidence="1">
    <location>
        <position position="184"/>
    </location>
    <ligand>
        <name>substrate</name>
    </ligand>
</feature>
<feature type="binding site" evidence="3 11">
    <location>
        <position position="208"/>
    </location>
    <ligand>
        <name>Mn(2+)</name>
        <dbReference type="ChEBI" id="CHEBI:29035"/>
        <label>2</label>
    </ligand>
</feature>
<feature type="binding site" evidence="1">
    <location>
        <begin position="232"/>
        <end position="240"/>
    </location>
    <ligand>
        <name>substrate</name>
    </ligand>
</feature>
<feature type="binding site" evidence="3 11">
    <location>
        <position position="232"/>
    </location>
    <ligand>
        <name>Mn(2+)</name>
        <dbReference type="ChEBI" id="CHEBI:29035"/>
        <label>1</label>
    </ligand>
</feature>
<feature type="binding site" evidence="3 11">
    <location>
        <position position="233"/>
    </location>
    <ligand>
        <name>Mn(2+)</name>
        <dbReference type="ChEBI" id="CHEBI:29035"/>
        <label>2</label>
    </ligand>
</feature>
<feature type="binding site" evidence="3 11">
    <location>
        <position position="236"/>
    </location>
    <ligand>
        <name>Mn(2+)</name>
        <dbReference type="ChEBI" id="CHEBI:29035"/>
        <label>1</label>
    </ligand>
</feature>
<feature type="binding site" evidence="1">
    <location>
        <begin position="262"/>
        <end position="264"/>
    </location>
    <ligand>
        <name>substrate</name>
    </ligand>
</feature>
<feature type="modified residue" description="N-acetylserine" evidence="12">
    <location>
        <position position="63"/>
    </location>
</feature>
<feature type="splice variant" id="VSP_008895" description="In isoform 2." evidence="5">
    <original>LVEHFFQSLVNTSGMTLHIRQLAGENSHHIIEATFKAFARALRQATETDPRRGGTIPSSKGVLSRS</original>
    <variation>VLSLLLELSSFGFICVIRCLVIIESVAKNCLTFRFVVGGALFPVVGEYFWYDSSHPAARW</variation>
    <location>
        <begin position="205"/>
        <end position="270"/>
    </location>
</feature>
<feature type="sequence conflict" description="In Ref. 6; BAD44082." evidence="8" ref="6">
    <original>Y</original>
    <variation>C</variation>
    <location>
        <position position="201"/>
    </location>
</feature>
<feature type="strand" evidence="13">
    <location>
        <begin position="75"/>
        <end position="81"/>
    </location>
</feature>
<feature type="strand" evidence="13">
    <location>
        <begin position="86"/>
        <end position="92"/>
    </location>
</feature>
<feature type="strand" evidence="13">
    <location>
        <begin position="99"/>
        <end position="102"/>
    </location>
</feature>
<feature type="helix" evidence="13">
    <location>
        <begin position="106"/>
        <end position="119"/>
    </location>
</feature>
<feature type="strand" evidence="13">
    <location>
        <begin position="122"/>
        <end position="128"/>
    </location>
</feature>
<feature type="turn" evidence="13">
    <location>
        <begin position="131"/>
        <end position="133"/>
    </location>
</feature>
<feature type="helix" evidence="13">
    <location>
        <begin position="136"/>
        <end position="154"/>
    </location>
</feature>
<feature type="strand" evidence="13">
    <location>
        <begin position="166"/>
        <end position="170"/>
    </location>
</feature>
<feature type="strand" evidence="13">
    <location>
        <begin position="173"/>
        <end position="180"/>
    </location>
</feature>
<feature type="strand" evidence="13">
    <location>
        <begin position="186"/>
        <end position="190"/>
    </location>
</feature>
<feature type="strand" evidence="13">
    <location>
        <begin position="194"/>
        <end position="198"/>
    </location>
</feature>
<feature type="helix" evidence="13">
    <location>
        <begin position="205"/>
        <end position="217"/>
    </location>
</feature>
<feature type="strand" evidence="13">
    <location>
        <begin position="220"/>
        <end position="227"/>
    </location>
</feature>
<feature type="helix" evidence="13">
    <location>
        <begin position="231"/>
        <end position="250"/>
    </location>
</feature>
<reference key="1">
    <citation type="journal article" date="1994" name="Plant Physiol.">
        <title>Isolation and characterization of cDNAs encoding imidazoleglycerolphosphate dehydratase from Arabidopsis thaliana.</title>
        <authorList>
            <person name="Tada S."/>
            <person name="Volrath S."/>
            <person name="Guyer D."/>
            <person name="Scheidegger A."/>
            <person name="Ryals J."/>
            <person name="Ohta D."/>
            <person name="Ward E."/>
        </authorList>
    </citation>
    <scope>NUCLEOTIDE SEQUENCE [MRNA] (ISOFORM 1)</scope>
    <scope>CATALYTIC ACTIVITY</scope>
    <scope>PATHWAY</scope>
</reference>
<reference key="2">
    <citation type="journal article" date="2000" name="DNA Res.">
        <title>Structural analysis of Arabidopsis thaliana chromosome 3. I. Sequence features of the regions of 4,504,864 bp covered by sixty P1 and TAC clones.</title>
        <authorList>
            <person name="Sato S."/>
            <person name="Nakamura Y."/>
            <person name="Kaneko T."/>
            <person name="Katoh T."/>
            <person name="Asamizu E."/>
            <person name="Tabata S."/>
        </authorList>
    </citation>
    <scope>NUCLEOTIDE SEQUENCE [LARGE SCALE GENOMIC DNA]</scope>
    <source>
        <strain>cv. Columbia</strain>
    </source>
</reference>
<reference key="3">
    <citation type="journal article" date="2017" name="Plant J.">
        <title>Araport11: a complete reannotation of the Arabidopsis thaliana reference genome.</title>
        <authorList>
            <person name="Cheng C.Y."/>
            <person name="Krishnakumar V."/>
            <person name="Chan A.P."/>
            <person name="Thibaud-Nissen F."/>
            <person name="Schobel S."/>
            <person name="Town C.D."/>
        </authorList>
    </citation>
    <scope>GENOME REANNOTATION</scope>
    <source>
        <strain>cv. Columbia</strain>
    </source>
</reference>
<reference key="4">
    <citation type="journal article" date="2002" name="Science">
        <title>Functional annotation of a full-length Arabidopsis cDNA collection.</title>
        <authorList>
            <person name="Seki M."/>
            <person name="Narusaka M."/>
            <person name="Kamiya A."/>
            <person name="Ishida J."/>
            <person name="Satou M."/>
            <person name="Sakurai T."/>
            <person name="Nakajima M."/>
            <person name="Enju A."/>
            <person name="Akiyama K."/>
            <person name="Oono Y."/>
            <person name="Muramatsu M."/>
            <person name="Hayashizaki Y."/>
            <person name="Kawai J."/>
            <person name="Carninci P."/>
            <person name="Itoh M."/>
            <person name="Ishii Y."/>
            <person name="Arakawa T."/>
            <person name="Shibata K."/>
            <person name="Shinagawa A."/>
            <person name="Shinozaki K."/>
        </authorList>
    </citation>
    <scope>NUCLEOTIDE SEQUENCE [LARGE SCALE MRNA] (ISOFORM 1)</scope>
    <source>
        <strain>cv. Columbia</strain>
    </source>
</reference>
<reference key="5">
    <citation type="journal article" date="2003" name="Science">
        <title>Empirical analysis of transcriptional activity in the Arabidopsis genome.</title>
        <authorList>
            <person name="Yamada K."/>
            <person name="Lim J."/>
            <person name="Dale J.M."/>
            <person name="Chen H."/>
            <person name="Shinn P."/>
            <person name="Palm C.J."/>
            <person name="Southwick A.M."/>
            <person name="Wu H.C."/>
            <person name="Kim C.J."/>
            <person name="Nguyen M."/>
            <person name="Pham P.K."/>
            <person name="Cheuk R.F."/>
            <person name="Karlin-Newmann G."/>
            <person name="Liu S.X."/>
            <person name="Lam B."/>
            <person name="Sakano H."/>
            <person name="Wu T."/>
            <person name="Yu G."/>
            <person name="Miranda M."/>
            <person name="Quach H.L."/>
            <person name="Tripp M."/>
            <person name="Chang C.H."/>
            <person name="Lee J.M."/>
            <person name="Toriumi M.J."/>
            <person name="Chan M.M."/>
            <person name="Tang C.C."/>
            <person name="Onodera C.S."/>
            <person name="Deng J.M."/>
            <person name="Akiyama K."/>
            <person name="Ansari Y."/>
            <person name="Arakawa T."/>
            <person name="Banh J."/>
            <person name="Banno F."/>
            <person name="Bowser L."/>
            <person name="Brooks S.Y."/>
            <person name="Carninci P."/>
            <person name="Chao Q."/>
            <person name="Choy N."/>
            <person name="Enju A."/>
            <person name="Goldsmith A.D."/>
            <person name="Gurjal M."/>
            <person name="Hansen N.F."/>
            <person name="Hayashizaki Y."/>
            <person name="Johnson-Hopson C."/>
            <person name="Hsuan V.W."/>
            <person name="Iida K."/>
            <person name="Karnes M."/>
            <person name="Khan S."/>
            <person name="Koesema E."/>
            <person name="Ishida J."/>
            <person name="Jiang P.X."/>
            <person name="Jones T."/>
            <person name="Kawai J."/>
            <person name="Kamiya A."/>
            <person name="Meyers C."/>
            <person name="Nakajima M."/>
            <person name="Narusaka M."/>
            <person name="Seki M."/>
            <person name="Sakurai T."/>
            <person name="Satou M."/>
            <person name="Tamse R."/>
            <person name="Vaysberg M."/>
            <person name="Wallender E.K."/>
            <person name="Wong C."/>
            <person name="Yamamura Y."/>
            <person name="Yuan S."/>
            <person name="Shinozaki K."/>
            <person name="Davis R.W."/>
            <person name="Theologis A."/>
            <person name="Ecker J.R."/>
        </authorList>
    </citation>
    <scope>NUCLEOTIDE SEQUENCE [LARGE SCALE MRNA] (ISOFORM 2)</scope>
    <source>
        <strain>cv. Columbia</strain>
    </source>
</reference>
<reference key="6">
    <citation type="submission" date="2004-09" db="EMBL/GenBank/DDBJ databases">
        <title>Large-scale analysis of RIKEN Arabidopsis full-length (RAFL) cDNAs.</title>
        <authorList>
            <person name="Totoki Y."/>
            <person name="Seki M."/>
            <person name="Ishida J."/>
            <person name="Nakajima M."/>
            <person name="Enju A."/>
            <person name="Kamiya A."/>
            <person name="Narusaka M."/>
            <person name="Shin-i T."/>
            <person name="Nakagawa M."/>
            <person name="Sakamoto N."/>
            <person name="Oishi K."/>
            <person name="Kohara Y."/>
            <person name="Kobayashi M."/>
            <person name="Toyoda A."/>
            <person name="Sakaki Y."/>
            <person name="Sakurai T."/>
            <person name="Iida K."/>
            <person name="Akiyama K."/>
            <person name="Satou M."/>
            <person name="Toyoda T."/>
            <person name="Konagaya A."/>
            <person name="Carninci P."/>
            <person name="Kawai J."/>
            <person name="Hayashizaki Y."/>
            <person name="Shinozaki K."/>
        </authorList>
    </citation>
    <scope>NUCLEOTIDE SEQUENCE [LARGE SCALE MRNA] (ISOFORM 1)</scope>
    <source>
        <strain>cv. Columbia</strain>
    </source>
</reference>
<reference key="7">
    <citation type="submission" date="2002-03" db="EMBL/GenBank/DDBJ databases">
        <title>Full-length cDNA from Arabidopsis thaliana.</title>
        <authorList>
            <person name="Brover V.V."/>
            <person name="Troukhan M.E."/>
            <person name="Alexandrov N.A."/>
            <person name="Lu Y.-P."/>
            <person name="Flavell R.B."/>
            <person name="Feldmann K.A."/>
        </authorList>
    </citation>
    <scope>NUCLEOTIDE SEQUENCE [LARGE SCALE MRNA] (ISOFORM 1)</scope>
</reference>
<reference key="8">
    <citation type="journal article" date="2006" name="Amino Acids">
        <title>Histidine biosynthesis in plants.</title>
        <authorList>
            <person name="Stepansky A."/>
            <person name="Leustek T."/>
        </authorList>
    </citation>
    <scope>GENE FAMILY</scope>
    <scope>NOMENCLATURE</scope>
</reference>
<reference key="9">
    <citation type="journal article" date="2007" name="Plant Physiol.">
        <title>Genetic dissection of histidine biosynthesis in Arabidopsis.</title>
        <authorList>
            <person name="Muralla R."/>
            <person name="Sweeney C."/>
            <person name="Stepansky A."/>
            <person name="Leustek T."/>
            <person name="Meinke D."/>
        </authorList>
    </citation>
    <scope>GENE FAMILY</scope>
    <scope>NOMENCLATURE</scope>
</reference>
<reference key="10">
    <citation type="journal article" date="2012" name="Mol. Cell. Proteomics">
        <title>Comparative large-scale characterisation of plant vs. mammal proteins reveals similar and idiosyncratic N-alpha acetylation features.</title>
        <authorList>
            <person name="Bienvenut W.V."/>
            <person name="Sumpton D."/>
            <person name="Martinez A."/>
            <person name="Lilla S."/>
            <person name="Espagne C."/>
            <person name="Meinnel T."/>
            <person name="Giglione C."/>
        </authorList>
    </citation>
    <scope>ACETYLATION [LARGE SCALE ANALYSIS] AT SER-63</scope>
    <scope>CLEAVAGE OF TRANSIT PEPTIDE [LARGE SCALE ANALYSIS] AFTER CYS-62</scope>
    <scope>IDENTIFICATION BY MASS SPECTROMETRY [LARGE SCALE ANALYSIS]</scope>
</reference>
<reference key="11">
    <citation type="journal article" date="2005" name="Structure">
        <title>Structure and mechanism of imidazoleglycerol-phosphate dehydratase.</title>
        <authorList>
            <person name="Glynn S.E."/>
            <person name="Baker P.J."/>
            <person name="Sedelnikova S.E."/>
            <person name="Davies C.L."/>
            <person name="Eadsforth T.C."/>
            <person name="Levy C.W."/>
            <person name="Rodgers H.F."/>
            <person name="Blackburn G.M."/>
            <person name="Hawkes T.R."/>
            <person name="Viner R."/>
            <person name="Rice D.W."/>
        </authorList>
    </citation>
    <scope>X-RAY CRYSTALLOGRAPHY (3.00 ANGSTROMS) OF 64-270 IN COMPLEX WITH MANGANESE IONS</scope>
</reference>
<name>HIS5A_ARATH</name>
<protein>
    <recommendedName>
        <fullName evidence="7">Imidazoleglycerol-phosphate dehydratase 1, chloroplastic</fullName>
        <shortName evidence="7">IGPD 1</shortName>
        <ecNumber evidence="4">4.2.1.19</ecNumber>
    </recommendedName>
    <alternativeName>
        <fullName evidence="6">Protein HISTIDINE BIOSYNTHESIS 5A</fullName>
    </alternativeName>
</protein>
<comment type="catalytic activity">
    <reaction evidence="4">
        <text>D-erythro-1-(imidazol-4-yl)glycerol 3-phosphate = 3-(imidazol-4-yl)-2-oxopropyl phosphate + H2O</text>
        <dbReference type="Rhea" id="RHEA:11040"/>
        <dbReference type="ChEBI" id="CHEBI:15377"/>
        <dbReference type="ChEBI" id="CHEBI:57766"/>
        <dbReference type="ChEBI" id="CHEBI:58278"/>
        <dbReference type="EC" id="4.2.1.19"/>
    </reaction>
</comment>
<comment type="cofactor">
    <cofactor evidence="3">
        <name>Mn(2+)</name>
        <dbReference type="ChEBI" id="CHEBI:29035"/>
    </cofactor>
    <text evidence="3">Binds 2 manganese ions per subunit.</text>
</comment>
<comment type="pathway">
    <text evidence="4">Amino-acid biosynthesis; L-histidine biosynthesis; L-histidine from 5-phospho-alpha-D-ribose 1-diphosphate: step 6/9.</text>
</comment>
<comment type="subcellular location">
    <subcellularLocation>
        <location evidence="8">Plastid</location>
        <location evidence="8">Chloroplast</location>
    </subcellularLocation>
</comment>
<comment type="alternative products">
    <event type="alternative splicing"/>
    <isoform>
        <id>P34047-1</id>
        <name>1</name>
        <sequence type="displayed"/>
    </isoform>
    <isoform>
        <id>P34047-2</id>
        <name>2</name>
        <sequence type="described" ref="VSP_008895"/>
    </isoform>
    <text>Experimental confirmation may be lacking for some isoforms.</text>
</comment>
<comment type="miscellaneous">
    <molecule>Isoform 2</molecule>
    <text evidence="8">May be due to an intron retention.</text>
</comment>
<comment type="similarity">
    <text evidence="8">Belongs to the imidazoleglycerol-phosphate dehydratase family.</text>
</comment>
<gene>
    <name evidence="6" type="primary">HISN5A</name>
    <name evidence="9" type="ordered locus">At3g22425</name>
    <name evidence="10" type="ORF">MCB17.17</name>
</gene>
<organism>
    <name type="scientific">Arabidopsis thaliana</name>
    <name type="common">Mouse-ear cress</name>
    <dbReference type="NCBI Taxonomy" id="3702"/>
    <lineage>
        <taxon>Eukaryota</taxon>
        <taxon>Viridiplantae</taxon>
        <taxon>Streptophyta</taxon>
        <taxon>Embryophyta</taxon>
        <taxon>Tracheophyta</taxon>
        <taxon>Spermatophyta</taxon>
        <taxon>Magnoliopsida</taxon>
        <taxon>eudicotyledons</taxon>
        <taxon>Gunneridae</taxon>
        <taxon>Pentapetalae</taxon>
        <taxon>rosids</taxon>
        <taxon>malvids</taxon>
        <taxon>Brassicales</taxon>
        <taxon>Brassicaceae</taxon>
        <taxon>Camelineae</taxon>
        <taxon>Arabidopsis</taxon>
    </lineage>
</organism>
<keyword id="KW-0002">3D-structure</keyword>
<keyword id="KW-0007">Acetylation</keyword>
<keyword id="KW-0025">Alternative splicing</keyword>
<keyword id="KW-0028">Amino-acid biosynthesis</keyword>
<keyword id="KW-0150">Chloroplast</keyword>
<keyword id="KW-0368">Histidine biosynthesis</keyword>
<keyword id="KW-0456">Lyase</keyword>
<keyword id="KW-0464">Manganese</keyword>
<keyword id="KW-0479">Metal-binding</keyword>
<keyword id="KW-0934">Plastid</keyword>
<keyword id="KW-1185">Reference proteome</keyword>
<keyword id="KW-0809">Transit peptide</keyword>
<accession>P34047</accession>
<accession>Q67YN9</accession>
<accession>Q67YZ9</accession>
<accession>Q8VYM1</accession>
<proteinExistence type="evidence at protein level"/>
<dbReference type="EC" id="4.2.1.19" evidence="4"/>
<dbReference type="EMBL" id="U02689">
    <property type="protein sequence ID" value="AAA93196.1"/>
    <property type="molecule type" value="mRNA"/>
</dbReference>
<dbReference type="EMBL" id="AB022215">
    <property type="protein sequence ID" value="BAB01781.1"/>
    <property type="molecule type" value="Genomic_DNA"/>
</dbReference>
<dbReference type="EMBL" id="CP002686">
    <property type="protein sequence ID" value="AEE76636.1"/>
    <property type="molecule type" value="Genomic_DNA"/>
</dbReference>
<dbReference type="EMBL" id="CP002686">
    <property type="protein sequence ID" value="AEE76637.1"/>
    <property type="molecule type" value="Genomic_DNA"/>
</dbReference>
<dbReference type="EMBL" id="AK118815">
    <property type="protein sequence ID" value="BAC43405.1"/>
    <property type="molecule type" value="mRNA"/>
</dbReference>
<dbReference type="EMBL" id="AY070442">
    <property type="protein sequence ID" value="AAL49845.1"/>
    <property type="molecule type" value="mRNA"/>
</dbReference>
<dbReference type="EMBL" id="AK176319">
    <property type="protein sequence ID" value="BAD44082.1"/>
    <property type="molecule type" value="mRNA"/>
</dbReference>
<dbReference type="EMBL" id="AK176429">
    <property type="protein sequence ID" value="BAD44192.1"/>
    <property type="molecule type" value="mRNA"/>
</dbReference>
<dbReference type="EMBL" id="AY087948">
    <property type="protein sequence ID" value="AAM65496.1"/>
    <property type="molecule type" value="mRNA"/>
</dbReference>
<dbReference type="RefSeq" id="NP_850624.1">
    <molecule id="P34047-2"/>
    <property type="nucleotide sequence ID" value="NM_180293.1"/>
</dbReference>
<dbReference type="RefSeq" id="NP_850625.1">
    <molecule id="P34047-1"/>
    <property type="nucleotide sequence ID" value="NM_180294.2"/>
</dbReference>
<dbReference type="PDB" id="2F1D">
    <property type="method" value="X-ray"/>
    <property type="resolution" value="3.00 A"/>
    <property type="chains" value="A/B/C/D/E/F/G/H/I/J/K/L/M/N/O/P=64-270"/>
</dbReference>
<dbReference type="PDBsum" id="2F1D"/>
<dbReference type="SMR" id="P34047"/>
<dbReference type="BioGRID" id="7144">
    <property type="interactions" value="1"/>
</dbReference>
<dbReference type="DIP" id="DIP-48462N"/>
<dbReference type="FunCoup" id="P34047">
    <property type="interactions" value="508"/>
</dbReference>
<dbReference type="STRING" id="3702.P34047"/>
<dbReference type="iPTMnet" id="P34047"/>
<dbReference type="PaxDb" id="3702-AT3G22425.2"/>
<dbReference type="ProteomicsDB" id="230245">
    <molecule id="P34047-1"/>
</dbReference>
<dbReference type="EnsemblPlants" id="AT3G22425.1">
    <molecule id="P34047-2"/>
    <property type="protein sequence ID" value="AT3G22425.1"/>
    <property type="gene ID" value="AT3G22425"/>
</dbReference>
<dbReference type="EnsemblPlants" id="AT3G22425.2">
    <molecule id="P34047-1"/>
    <property type="protein sequence ID" value="AT3G22425.2"/>
    <property type="gene ID" value="AT3G22425"/>
</dbReference>
<dbReference type="GeneID" id="821812"/>
<dbReference type="Gramene" id="AT3G22425.1">
    <molecule id="P34047-2"/>
    <property type="protein sequence ID" value="AT3G22425.1"/>
    <property type="gene ID" value="AT3G22425"/>
</dbReference>
<dbReference type="Gramene" id="AT3G22425.2">
    <molecule id="P34047-1"/>
    <property type="protein sequence ID" value="AT3G22425.2"/>
    <property type="gene ID" value="AT3G22425"/>
</dbReference>
<dbReference type="KEGG" id="ath:AT3G22425"/>
<dbReference type="Araport" id="AT3G22425"/>
<dbReference type="TAIR" id="AT3G22425">
    <property type="gene designation" value="IGPD"/>
</dbReference>
<dbReference type="eggNOG" id="KOG3143">
    <property type="taxonomic scope" value="Eukaryota"/>
</dbReference>
<dbReference type="HOGENOM" id="CLU_044308_1_1_1"/>
<dbReference type="InParanoid" id="P34047"/>
<dbReference type="OMA" id="GIPFFDH"/>
<dbReference type="PhylomeDB" id="P34047"/>
<dbReference type="BioCyc" id="MetaCyc:AT3G22425-MONOMER"/>
<dbReference type="UniPathway" id="UPA00031">
    <property type="reaction ID" value="UER00011"/>
</dbReference>
<dbReference type="EvolutionaryTrace" id="P34047"/>
<dbReference type="PRO" id="PR:P34047"/>
<dbReference type="Proteomes" id="UP000006548">
    <property type="component" value="Chromosome 3"/>
</dbReference>
<dbReference type="ExpressionAtlas" id="P34047">
    <property type="expression patterns" value="baseline and differential"/>
</dbReference>
<dbReference type="GO" id="GO:0009507">
    <property type="term" value="C:chloroplast"/>
    <property type="evidence" value="ECO:0007669"/>
    <property type="project" value="UniProtKB-SubCell"/>
</dbReference>
<dbReference type="GO" id="GO:0004424">
    <property type="term" value="F:imidazoleglycerol-phosphate dehydratase activity"/>
    <property type="evidence" value="ECO:0000314"/>
    <property type="project" value="TAIR"/>
</dbReference>
<dbReference type="GO" id="GO:0046872">
    <property type="term" value="F:metal ion binding"/>
    <property type="evidence" value="ECO:0007669"/>
    <property type="project" value="UniProtKB-KW"/>
</dbReference>
<dbReference type="GO" id="GO:0000105">
    <property type="term" value="P:L-histidine biosynthetic process"/>
    <property type="evidence" value="ECO:0000314"/>
    <property type="project" value="TAIR"/>
</dbReference>
<dbReference type="CDD" id="cd07914">
    <property type="entry name" value="IGPD"/>
    <property type="match status" value="1"/>
</dbReference>
<dbReference type="FunFam" id="3.30.230.40:FF:000002">
    <property type="entry name" value="Imidazoleglycerol-phosphate dehydratase"/>
    <property type="match status" value="1"/>
</dbReference>
<dbReference type="FunFam" id="3.30.230.40:FF:000003">
    <property type="entry name" value="Imidazoleglycerol-phosphate dehydratase HisB"/>
    <property type="match status" value="1"/>
</dbReference>
<dbReference type="Gene3D" id="3.30.230.40">
    <property type="entry name" value="Imidazole glycerol phosphate dehydratase, domain 1"/>
    <property type="match status" value="2"/>
</dbReference>
<dbReference type="HAMAP" id="MF_00076">
    <property type="entry name" value="HisB"/>
    <property type="match status" value="1"/>
</dbReference>
<dbReference type="InterPro" id="IPR038494">
    <property type="entry name" value="IGPD_sf"/>
</dbReference>
<dbReference type="InterPro" id="IPR000807">
    <property type="entry name" value="ImidazoleglycerolP_deHydtase"/>
</dbReference>
<dbReference type="InterPro" id="IPR020565">
    <property type="entry name" value="ImidazoleglycerP_deHydtase_CS"/>
</dbReference>
<dbReference type="InterPro" id="IPR020568">
    <property type="entry name" value="Ribosomal_Su5_D2-typ_SF"/>
</dbReference>
<dbReference type="NCBIfam" id="NF002108">
    <property type="entry name" value="PRK00951.1-3"/>
    <property type="match status" value="1"/>
</dbReference>
<dbReference type="NCBIfam" id="NF002111">
    <property type="entry name" value="PRK00951.2-1"/>
    <property type="match status" value="1"/>
</dbReference>
<dbReference type="NCBIfam" id="NF002114">
    <property type="entry name" value="PRK00951.2-4"/>
    <property type="match status" value="1"/>
</dbReference>
<dbReference type="PANTHER" id="PTHR23133:SF2">
    <property type="entry name" value="IMIDAZOLEGLYCEROL-PHOSPHATE DEHYDRATASE"/>
    <property type="match status" value="1"/>
</dbReference>
<dbReference type="PANTHER" id="PTHR23133">
    <property type="entry name" value="IMIDAZOLEGLYCEROL-PHOSPHATE DEHYDRATASE HIS7"/>
    <property type="match status" value="1"/>
</dbReference>
<dbReference type="Pfam" id="PF00475">
    <property type="entry name" value="IGPD"/>
    <property type="match status" value="1"/>
</dbReference>
<dbReference type="SUPFAM" id="SSF54211">
    <property type="entry name" value="Ribosomal protein S5 domain 2-like"/>
    <property type="match status" value="2"/>
</dbReference>
<dbReference type="PROSITE" id="PS00954">
    <property type="entry name" value="IGP_DEHYDRATASE_1"/>
    <property type="match status" value="1"/>
</dbReference>
<dbReference type="PROSITE" id="PS00955">
    <property type="entry name" value="IGP_DEHYDRATASE_2"/>
    <property type="match status" value="1"/>
</dbReference>
<evidence type="ECO:0000250" key="1">
    <source>
        <dbReference type="UniProtKB" id="O23346"/>
    </source>
</evidence>
<evidence type="ECO:0000256" key="2">
    <source>
        <dbReference type="SAM" id="MobiDB-lite"/>
    </source>
</evidence>
<evidence type="ECO:0000269" key="3">
    <source>
    </source>
</evidence>
<evidence type="ECO:0000269" key="4">
    <source>
    </source>
</evidence>
<evidence type="ECO:0000303" key="5">
    <source>
    </source>
</evidence>
<evidence type="ECO:0000303" key="6">
    <source>
    </source>
</evidence>
<evidence type="ECO:0000303" key="7">
    <source>
    </source>
</evidence>
<evidence type="ECO:0000305" key="8"/>
<evidence type="ECO:0000312" key="9">
    <source>
        <dbReference type="Araport" id="AT3G22425"/>
    </source>
</evidence>
<evidence type="ECO:0000312" key="10">
    <source>
        <dbReference type="EMBL" id="BAB01781.1"/>
    </source>
</evidence>
<evidence type="ECO:0007744" key="11">
    <source>
        <dbReference type="PDB" id="2F1D"/>
    </source>
</evidence>
<evidence type="ECO:0007744" key="12">
    <source>
    </source>
</evidence>
<evidence type="ECO:0007829" key="13">
    <source>
        <dbReference type="PDB" id="2F1D"/>
    </source>
</evidence>
<sequence>MELSSASAILSHSSSAAQLLRPKLGFIDLLPRRAMIVSSPSSSLPRFLRMESQSQLRQSISCSASSSSSMALGRIGEVKRVTKETNVSVKINLDGTGVADSSSGIPFLDHMLDQLASHGLFDVHVRATGDVHIDDHHTNEDIALAIGTALLKALGERKGINRFGDFTAPLDEALIHVSLDLSGRPYLGYNLEIPTQRVGTYDTQLVEHFFQSLVNTSGMTLHIRQLAGENSHHIIEATFKAFARALRQATETDPRRGGTIPSSKGVLSRS</sequence>